<name>NXPH2_MOUSE</name>
<protein>
    <recommendedName>
        <fullName>Neurexophilin-2</fullName>
    </recommendedName>
</protein>
<accession>Q61199</accession>
<accession>Q8BIN8</accession>
<gene>
    <name type="primary">Nxph2</name>
    <name type="synonym">Nph2</name>
</gene>
<keyword id="KW-0325">Glycoprotein</keyword>
<keyword id="KW-1185">Reference proteome</keyword>
<keyword id="KW-0964">Secreted</keyword>
<keyword id="KW-0732">Signal</keyword>
<dbReference type="EMBL" id="AK038402">
    <property type="protein sequence ID" value="BAC29985.1"/>
    <property type="molecule type" value="mRNA"/>
</dbReference>
<dbReference type="EMBL" id="U56650">
    <property type="protein sequence ID" value="AAB18763.1"/>
    <property type="molecule type" value="Genomic_DNA"/>
</dbReference>
<dbReference type="CCDS" id="CCDS15729.1"/>
<dbReference type="RefSeq" id="NP_032778.1">
    <property type="nucleotide sequence ID" value="NM_008752.2"/>
</dbReference>
<dbReference type="SMR" id="Q61199"/>
<dbReference type="FunCoup" id="Q61199">
    <property type="interactions" value="16"/>
</dbReference>
<dbReference type="STRING" id="10090.ENSMUSP00000100009"/>
<dbReference type="GlyCosmos" id="Q61199">
    <property type="glycosylation" value="4 sites, No reported glycans"/>
</dbReference>
<dbReference type="GlyGen" id="Q61199">
    <property type="glycosylation" value="4 sites, 2 N-linked glycans (2 sites)"/>
</dbReference>
<dbReference type="PhosphoSitePlus" id="Q61199"/>
<dbReference type="PaxDb" id="10090-ENSMUSP00000100009"/>
<dbReference type="Antibodypedia" id="51377">
    <property type="antibodies" value="99 antibodies from 23 providers"/>
</dbReference>
<dbReference type="DNASU" id="18232"/>
<dbReference type="Ensembl" id="ENSMUST00000102945.2">
    <property type="protein sequence ID" value="ENSMUSP00000100009.2"/>
    <property type="gene ID" value="ENSMUSG00000069132.4"/>
</dbReference>
<dbReference type="GeneID" id="18232"/>
<dbReference type="KEGG" id="mmu:18232"/>
<dbReference type="UCSC" id="uc008iog.1">
    <property type="organism name" value="mouse"/>
</dbReference>
<dbReference type="AGR" id="MGI:107491"/>
<dbReference type="CTD" id="11249"/>
<dbReference type="MGI" id="MGI:107491">
    <property type="gene designation" value="Nxph2"/>
</dbReference>
<dbReference type="VEuPathDB" id="HostDB:ENSMUSG00000069132"/>
<dbReference type="eggNOG" id="ENOG502QUPW">
    <property type="taxonomic scope" value="Eukaryota"/>
</dbReference>
<dbReference type="GeneTree" id="ENSGT00950000182883"/>
<dbReference type="HOGENOM" id="CLU_067114_2_1_1"/>
<dbReference type="InParanoid" id="Q61199"/>
<dbReference type="OMA" id="IFCDAKQ"/>
<dbReference type="OrthoDB" id="9863867at2759"/>
<dbReference type="PhylomeDB" id="Q61199"/>
<dbReference type="TreeFam" id="TF333047"/>
<dbReference type="BioGRID-ORCS" id="18232">
    <property type="hits" value="2 hits in 76 CRISPR screens"/>
</dbReference>
<dbReference type="PRO" id="PR:Q61199"/>
<dbReference type="Proteomes" id="UP000000589">
    <property type="component" value="Chromosome 2"/>
</dbReference>
<dbReference type="RNAct" id="Q61199">
    <property type="molecule type" value="protein"/>
</dbReference>
<dbReference type="Bgee" id="ENSMUSG00000069132">
    <property type="expression patterns" value="Expressed in cortical plate and 19 other cell types or tissues"/>
</dbReference>
<dbReference type="ExpressionAtlas" id="Q61199">
    <property type="expression patterns" value="baseline and differential"/>
</dbReference>
<dbReference type="GO" id="GO:0005576">
    <property type="term" value="C:extracellular region"/>
    <property type="evidence" value="ECO:0007669"/>
    <property type="project" value="UniProtKB-SubCell"/>
</dbReference>
<dbReference type="GO" id="GO:0005102">
    <property type="term" value="F:signaling receptor binding"/>
    <property type="evidence" value="ECO:0000304"/>
    <property type="project" value="MGI"/>
</dbReference>
<dbReference type="InterPro" id="IPR010450">
    <property type="entry name" value="Nxph"/>
</dbReference>
<dbReference type="InterPro" id="IPR026845">
    <property type="entry name" value="NXPH/NXPE"/>
</dbReference>
<dbReference type="PANTHER" id="PTHR17103">
    <property type="entry name" value="NEUREXOPHILIN"/>
    <property type="match status" value="1"/>
</dbReference>
<dbReference type="PANTHER" id="PTHR17103:SF11">
    <property type="entry name" value="NEUREXOPHILIN-2"/>
    <property type="match status" value="1"/>
</dbReference>
<dbReference type="Pfam" id="PF06312">
    <property type="entry name" value="Neurexophilin"/>
    <property type="match status" value="1"/>
</dbReference>
<dbReference type="PIRSF" id="PIRSF038019">
    <property type="entry name" value="Neurexophilin"/>
    <property type="match status" value="1"/>
</dbReference>
<proteinExistence type="evidence at transcript level"/>
<reference key="1">
    <citation type="journal article" date="2005" name="Science">
        <title>The transcriptional landscape of the mammalian genome.</title>
        <authorList>
            <person name="Carninci P."/>
            <person name="Kasukawa T."/>
            <person name="Katayama S."/>
            <person name="Gough J."/>
            <person name="Frith M.C."/>
            <person name="Maeda N."/>
            <person name="Oyama R."/>
            <person name="Ravasi T."/>
            <person name="Lenhard B."/>
            <person name="Wells C."/>
            <person name="Kodzius R."/>
            <person name="Shimokawa K."/>
            <person name="Bajic V.B."/>
            <person name="Brenner S.E."/>
            <person name="Batalov S."/>
            <person name="Forrest A.R."/>
            <person name="Zavolan M."/>
            <person name="Davis M.J."/>
            <person name="Wilming L.G."/>
            <person name="Aidinis V."/>
            <person name="Allen J.E."/>
            <person name="Ambesi-Impiombato A."/>
            <person name="Apweiler R."/>
            <person name="Aturaliya R.N."/>
            <person name="Bailey T.L."/>
            <person name="Bansal M."/>
            <person name="Baxter L."/>
            <person name="Beisel K.W."/>
            <person name="Bersano T."/>
            <person name="Bono H."/>
            <person name="Chalk A.M."/>
            <person name="Chiu K.P."/>
            <person name="Choudhary V."/>
            <person name="Christoffels A."/>
            <person name="Clutterbuck D.R."/>
            <person name="Crowe M.L."/>
            <person name="Dalla E."/>
            <person name="Dalrymple B.P."/>
            <person name="de Bono B."/>
            <person name="Della Gatta G."/>
            <person name="di Bernardo D."/>
            <person name="Down T."/>
            <person name="Engstrom P."/>
            <person name="Fagiolini M."/>
            <person name="Faulkner G."/>
            <person name="Fletcher C.F."/>
            <person name="Fukushima T."/>
            <person name="Furuno M."/>
            <person name="Futaki S."/>
            <person name="Gariboldi M."/>
            <person name="Georgii-Hemming P."/>
            <person name="Gingeras T.R."/>
            <person name="Gojobori T."/>
            <person name="Green R.E."/>
            <person name="Gustincich S."/>
            <person name="Harbers M."/>
            <person name="Hayashi Y."/>
            <person name="Hensch T.K."/>
            <person name="Hirokawa N."/>
            <person name="Hill D."/>
            <person name="Huminiecki L."/>
            <person name="Iacono M."/>
            <person name="Ikeo K."/>
            <person name="Iwama A."/>
            <person name="Ishikawa T."/>
            <person name="Jakt M."/>
            <person name="Kanapin A."/>
            <person name="Katoh M."/>
            <person name="Kawasawa Y."/>
            <person name="Kelso J."/>
            <person name="Kitamura H."/>
            <person name="Kitano H."/>
            <person name="Kollias G."/>
            <person name="Krishnan S.P."/>
            <person name="Kruger A."/>
            <person name="Kummerfeld S.K."/>
            <person name="Kurochkin I.V."/>
            <person name="Lareau L.F."/>
            <person name="Lazarevic D."/>
            <person name="Lipovich L."/>
            <person name="Liu J."/>
            <person name="Liuni S."/>
            <person name="McWilliam S."/>
            <person name="Madan Babu M."/>
            <person name="Madera M."/>
            <person name="Marchionni L."/>
            <person name="Matsuda H."/>
            <person name="Matsuzawa S."/>
            <person name="Miki H."/>
            <person name="Mignone F."/>
            <person name="Miyake S."/>
            <person name="Morris K."/>
            <person name="Mottagui-Tabar S."/>
            <person name="Mulder N."/>
            <person name="Nakano N."/>
            <person name="Nakauchi H."/>
            <person name="Ng P."/>
            <person name="Nilsson R."/>
            <person name="Nishiguchi S."/>
            <person name="Nishikawa S."/>
            <person name="Nori F."/>
            <person name="Ohara O."/>
            <person name="Okazaki Y."/>
            <person name="Orlando V."/>
            <person name="Pang K.C."/>
            <person name="Pavan W.J."/>
            <person name="Pavesi G."/>
            <person name="Pesole G."/>
            <person name="Petrovsky N."/>
            <person name="Piazza S."/>
            <person name="Reed J."/>
            <person name="Reid J.F."/>
            <person name="Ring B.Z."/>
            <person name="Ringwald M."/>
            <person name="Rost B."/>
            <person name="Ruan Y."/>
            <person name="Salzberg S.L."/>
            <person name="Sandelin A."/>
            <person name="Schneider C."/>
            <person name="Schoenbach C."/>
            <person name="Sekiguchi K."/>
            <person name="Semple C.A."/>
            <person name="Seno S."/>
            <person name="Sessa L."/>
            <person name="Sheng Y."/>
            <person name="Shibata Y."/>
            <person name="Shimada H."/>
            <person name="Shimada K."/>
            <person name="Silva D."/>
            <person name="Sinclair B."/>
            <person name="Sperling S."/>
            <person name="Stupka E."/>
            <person name="Sugiura K."/>
            <person name="Sultana R."/>
            <person name="Takenaka Y."/>
            <person name="Taki K."/>
            <person name="Tammoja K."/>
            <person name="Tan S.L."/>
            <person name="Tang S."/>
            <person name="Taylor M.S."/>
            <person name="Tegner J."/>
            <person name="Teichmann S.A."/>
            <person name="Ueda H.R."/>
            <person name="van Nimwegen E."/>
            <person name="Verardo R."/>
            <person name="Wei C.L."/>
            <person name="Yagi K."/>
            <person name="Yamanishi H."/>
            <person name="Zabarovsky E."/>
            <person name="Zhu S."/>
            <person name="Zimmer A."/>
            <person name="Hide W."/>
            <person name="Bult C."/>
            <person name="Grimmond S.M."/>
            <person name="Teasdale R.D."/>
            <person name="Liu E.T."/>
            <person name="Brusic V."/>
            <person name="Quackenbush J."/>
            <person name="Wahlestedt C."/>
            <person name="Mattick J.S."/>
            <person name="Hume D.A."/>
            <person name="Kai C."/>
            <person name="Sasaki D."/>
            <person name="Tomaru Y."/>
            <person name="Fukuda S."/>
            <person name="Kanamori-Katayama M."/>
            <person name="Suzuki M."/>
            <person name="Aoki J."/>
            <person name="Arakawa T."/>
            <person name="Iida J."/>
            <person name="Imamura K."/>
            <person name="Itoh M."/>
            <person name="Kato T."/>
            <person name="Kawaji H."/>
            <person name="Kawagashira N."/>
            <person name="Kawashima T."/>
            <person name="Kojima M."/>
            <person name="Kondo S."/>
            <person name="Konno H."/>
            <person name="Nakano K."/>
            <person name="Ninomiya N."/>
            <person name="Nishio T."/>
            <person name="Okada M."/>
            <person name="Plessy C."/>
            <person name="Shibata K."/>
            <person name="Shiraki T."/>
            <person name="Suzuki S."/>
            <person name="Tagami M."/>
            <person name="Waki K."/>
            <person name="Watahiki A."/>
            <person name="Okamura-Oho Y."/>
            <person name="Suzuki H."/>
            <person name="Kawai J."/>
            <person name="Hayashizaki Y."/>
        </authorList>
    </citation>
    <scope>NUCLEOTIDE SEQUENCE [LARGE SCALE MRNA]</scope>
    <source>
        <strain>C57BL/6J</strain>
        <tissue>Hypothalamus</tissue>
    </source>
</reference>
<reference key="2">
    <citation type="journal article" date="1996" name="J. Neurosci.">
        <title>Structure and evolution of neurexophilin.</title>
        <authorList>
            <person name="Petrenko A.G."/>
            <person name="Ullrich B."/>
            <person name="Missler M."/>
            <person name="Krasnoperov V."/>
            <person name="Rosahl T.W."/>
            <person name="Suedhof T.C."/>
        </authorList>
    </citation>
    <scope>NUCLEOTIDE SEQUENCE [GENOMIC DNA] OF 18-261</scope>
</reference>
<sequence length="261" mass="29975">MSLRPLPLLVVPGLLQLLFCDSEEVIHNTESVDWEDRTVPETLVGNLFHSRITSPLRLFVKQPPDPKPSYADNTKNFWDWLANITEIQEQLARTKRRPIVKTGKFKKMFGWGDFHSNIKTVKLNLLITGKIVDHGNGTFSVYFRHNSTGLGNVSVSLVPPSKVVEFEISPQSTLETKESKSFNCHIEYEKTDRAKKTALCNFDPSKICYQEQTQSHVSWLCSKPFKVICIHIIFYSVDYKLVQKVCPDYNYHSETPYLSFG</sequence>
<comment type="function">
    <text evidence="3">May be signaling molecules that resemble neuropeptides and that act by binding to alpha-neurexins and possibly other receptors.</text>
</comment>
<comment type="subcellular location">
    <subcellularLocation>
        <location evidence="3">Secreted</location>
    </subcellularLocation>
</comment>
<comment type="PTM">
    <text evidence="1">May be proteolytically processed at the boundary between the N-terminal non-conserved and the central conserved domain in neuron-like cells.</text>
</comment>
<comment type="miscellaneous">
    <text>Rodents express at detectable levels only neurexophilins-1, -3, and -4.</text>
</comment>
<comment type="similarity">
    <text evidence="3">Belongs to the neurexophilin family.</text>
</comment>
<organism>
    <name type="scientific">Mus musculus</name>
    <name type="common">Mouse</name>
    <dbReference type="NCBI Taxonomy" id="10090"/>
    <lineage>
        <taxon>Eukaryota</taxon>
        <taxon>Metazoa</taxon>
        <taxon>Chordata</taxon>
        <taxon>Craniata</taxon>
        <taxon>Vertebrata</taxon>
        <taxon>Euteleostomi</taxon>
        <taxon>Mammalia</taxon>
        <taxon>Eutheria</taxon>
        <taxon>Euarchontoglires</taxon>
        <taxon>Glires</taxon>
        <taxon>Rodentia</taxon>
        <taxon>Myomorpha</taxon>
        <taxon>Muroidea</taxon>
        <taxon>Muridae</taxon>
        <taxon>Murinae</taxon>
        <taxon>Mus</taxon>
        <taxon>Mus</taxon>
    </lineage>
</organism>
<evidence type="ECO:0000250" key="1"/>
<evidence type="ECO:0000255" key="2"/>
<evidence type="ECO:0000305" key="3"/>
<feature type="signal peptide" evidence="2">
    <location>
        <begin position="1"/>
        <end position="22"/>
    </location>
</feature>
<feature type="chain" id="PRO_0000020064" description="Neurexophilin-2">
    <location>
        <begin position="23"/>
        <end position="261"/>
    </location>
</feature>
<feature type="region of interest" description="II">
    <location>
        <begin position="23"/>
        <end position="87"/>
    </location>
</feature>
<feature type="region of interest" description="III">
    <location>
        <begin position="88"/>
        <end position="166"/>
    </location>
</feature>
<feature type="region of interest" description="IV (linker domain)">
    <location>
        <begin position="167"/>
        <end position="175"/>
    </location>
</feature>
<feature type="region of interest" description="V (Cys-rich)">
    <location>
        <begin position="176"/>
        <end position="261"/>
    </location>
</feature>
<feature type="glycosylation site" description="N-linked (GlcNAc...) asparagine" evidence="2">
    <location>
        <position position="83"/>
    </location>
</feature>
<feature type="glycosylation site" description="N-linked (GlcNAc...) asparagine" evidence="2">
    <location>
        <position position="136"/>
    </location>
</feature>
<feature type="glycosylation site" description="N-linked (GlcNAc...) asparagine" evidence="2">
    <location>
        <position position="146"/>
    </location>
</feature>
<feature type="glycosylation site" description="N-linked (GlcNAc...) asparagine" evidence="2">
    <location>
        <position position="152"/>
    </location>
</feature>
<feature type="sequence conflict" description="In Ref. 2; AAB18763." evidence="3" ref="2">
    <original>T</original>
    <variation>R</variation>
    <location>
        <position position="255"/>
    </location>
</feature>